<evidence type="ECO:0000255" key="1">
    <source>
        <dbReference type="HAMAP-Rule" id="MF_00818"/>
    </source>
</evidence>
<evidence type="ECO:0000269" key="2">
    <source ref="2"/>
</evidence>
<feature type="chain" id="PRO_0000162972" description="NADPH-dependent 7-cyano-7-deazaguanine reductase">
    <location>
        <begin position="1"/>
        <end position="165"/>
    </location>
</feature>
<feature type="active site" description="Thioimide intermediate" evidence="1">
    <location>
        <position position="56"/>
    </location>
</feature>
<feature type="active site" description="Proton donor" evidence="1">
    <location>
        <position position="63"/>
    </location>
</feature>
<feature type="binding site" evidence="1">
    <location>
        <begin position="78"/>
        <end position="80"/>
    </location>
    <ligand>
        <name>substrate</name>
    </ligand>
</feature>
<feature type="binding site" evidence="1">
    <location>
        <begin position="97"/>
        <end position="98"/>
    </location>
    <ligand>
        <name>substrate</name>
    </ligand>
</feature>
<feature type="mutagenesis site" description="Loss of catalytic activity." evidence="2">
    <original>C</original>
    <variation>A</variation>
    <location>
        <position position="56"/>
    </location>
</feature>
<dbReference type="EC" id="1.7.1.13" evidence="1"/>
<dbReference type="EMBL" id="BA000043">
    <property type="protein sequence ID" value="BAD75263.1"/>
    <property type="molecule type" value="Genomic_DNA"/>
</dbReference>
<dbReference type="RefSeq" id="WP_011230479.1">
    <property type="nucleotide sequence ID" value="NC_006510.1"/>
</dbReference>
<dbReference type="SMR" id="Q5L1B7"/>
<dbReference type="STRING" id="235909.GK0978"/>
<dbReference type="GeneID" id="32062910"/>
<dbReference type="KEGG" id="gka:GK0978"/>
<dbReference type="eggNOG" id="COG0780">
    <property type="taxonomic scope" value="Bacteria"/>
</dbReference>
<dbReference type="HOGENOM" id="CLU_102489_0_1_9"/>
<dbReference type="UniPathway" id="UPA00392"/>
<dbReference type="Proteomes" id="UP000001172">
    <property type="component" value="Chromosome"/>
</dbReference>
<dbReference type="GO" id="GO:0005737">
    <property type="term" value="C:cytoplasm"/>
    <property type="evidence" value="ECO:0007669"/>
    <property type="project" value="UniProtKB-SubCell"/>
</dbReference>
<dbReference type="GO" id="GO:0033739">
    <property type="term" value="F:preQ1 synthase activity"/>
    <property type="evidence" value="ECO:0007669"/>
    <property type="project" value="UniProtKB-UniRule"/>
</dbReference>
<dbReference type="GO" id="GO:0008616">
    <property type="term" value="P:queuosine biosynthetic process"/>
    <property type="evidence" value="ECO:0007669"/>
    <property type="project" value="UniProtKB-UniRule"/>
</dbReference>
<dbReference type="GO" id="GO:0006400">
    <property type="term" value="P:tRNA modification"/>
    <property type="evidence" value="ECO:0007669"/>
    <property type="project" value="UniProtKB-UniRule"/>
</dbReference>
<dbReference type="Gene3D" id="3.30.1130.10">
    <property type="match status" value="1"/>
</dbReference>
<dbReference type="HAMAP" id="MF_00818">
    <property type="entry name" value="QueF_type1"/>
    <property type="match status" value="1"/>
</dbReference>
<dbReference type="InterPro" id="IPR043133">
    <property type="entry name" value="GTP-CH-I_C/QueF"/>
</dbReference>
<dbReference type="InterPro" id="IPR050084">
    <property type="entry name" value="NADPH_dep_7-cyano-7-deazaG_red"/>
</dbReference>
<dbReference type="InterPro" id="IPR029500">
    <property type="entry name" value="QueF"/>
</dbReference>
<dbReference type="InterPro" id="IPR016856">
    <property type="entry name" value="QueF_type1"/>
</dbReference>
<dbReference type="NCBIfam" id="TIGR03139">
    <property type="entry name" value="QueF-II"/>
    <property type="match status" value="1"/>
</dbReference>
<dbReference type="PANTHER" id="PTHR34354">
    <property type="entry name" value="NADPH-DEPENDENT 7-CYANO-7-DEAZAGUANINE REDUCTASE"/>
    <property type="match status" value="1"/>
</dbReference>
<dbReference type="PANTHER" id="PTHR34354:SF1">
    <property type="entry name" value="NADPH-DEPENDENT 7-CYANO-7-DEAZAGUANINE REDUCTASE"/>
    <property type="match status" value="1"/>
</dbReference>
<dbReference type="Pfam" id="PF14489">
    <property type="entry name" value="QueF"/>
    <property type="match status" value="1"/>
</dbReference>
<dbReference type="PIRSF" id="PIRSF027377">
    <property type="entry name" value="Nitrile_oxidored_QueF"/>
    <property type="match status" value="1"/>
</dbReference>
<dbReference type="SUPFAM" id="SSF55620">
    <property type="entry name" value="Tetrahydrobiopterin biosynthesis enzymes-like"/>
    <property type="match status" value="1"/>
</dbReference>
<organism>
    <name type="scientific">Geobacillus kaustophilus (strain HTA426)</name>
    <dbReference type="NCBI Taxonomy" id="235909"/>
    <lineage>
        <taxon>Bacteria</taxon>
        <taxon>Bacillati</taxon>
        <taxon>Bacillota</taxon>
        <taxon>Bacilli</taxon>
        <taxon>Bacillales</taxon>
        <taxon>Anoxybacillaceae</taxon>
        <taxon>Geobacillus</taxon>
        <taxon>Geobacillus thermoleovorans group</taxon>
    </lineage>
</organism>
<proteinExistence type="evidence at protein level"/>
<gene>
    <name evidence="1" type="primary">queF</name>
    <name type="ordered locus">GK0978</name>
</gene>
<sequence>MAGRKEEELKDLTLLGNQGTTYSFTYNPNLLEVFDNKHPDRDYFVKFNCPEFTTLCPKTGQPDFATIYISYIPDKKCVESKSLKLYLFSFRNHGDFHEDCVNIIMNDLIKVMEPRYIEVWGKFTPRGGISIDPYCNWGRPGTKYEKMAEYRLLNHDLYPEKVDNR</sequence>
<protein>
    <recommendedName>
        <fullName evidence="1">NADPH-dependent 7-cyano-7-deazaguanine reductase</fullName>
        <ecNumber evidence="1">1.7.1.13</ecNumber>
    </recommendedName>
    <alternativeName>
        <fullName evidence="1">7-cyano-7-carbaguanine reductase</fullName>
    </alternativeName>
    <alternativeName>
        <fullName evidence="1">NADPH-dependent nitrile oxidoreductase</fullName>
    </alternativeName>
    <alternativeName>
        <fullName>Nitrile reductase</fullName>
        <shortName>NRed</shortName>
    </alternativeName>
    <alternativeName>
        <fullName evidence="1">PreQ(0) reductase</fullName>
    </alternativeName>
</protein>
<accession>Q5L1B7</accession>
<name>QUEF_GEOKA</name>
<comment type="function">
    <text evidence="1 2">Catalyzes the NADPH-dependent reduction of 7-cyano-7-deazaguanine (preQ0) to 7-aminomethyl-7-deazaguanine (preQ1), a late step in the queuosine pathway. Is highly specific for its natural substrate preQ0, since it cannot use various aliphatic, aromatic and heterocyclic nitriles, although it can reduce the substrate analog 5-cyanopyrrolo[2,3-d]pyrimidin-4-one with lesser efficiency.</text>
</comment>
<comment type="catalytic activity">
    <reaction evidence="1 2">
        <text>7-aminomethyl-7-carbaguanine + 2 NADP(+) = 7-cyano-7-deazaguanine + 2 NADPH + 3 H(+)</text>
        <dbReference type="Rhea" id="RHEA:13409"/>
        <dbReference type="ChEBI" id="CHEBI:15378"/>
        <dbReference type="ChEBI" id="CHEBI:45075"/>
        <dbReference type="ChEBI" id="CHEBI:57783"/>
        <dbReference type="ChEBI" id="CHEBI:58349"/>
        <dbReference type="ChEBI" id="CHEBI:58703"/>
        <dbReference type="EC" id="1.7.1.13"/>
    </reaction>
</comment>
<comment type="activity regulation">
    <text evidence="2">Is totally inhibited by 4-aminobenzylcyanide in vitro.</text>
</comment>
<comment type="biophysicochemical properties">
    <kinetics>
        <KM evidence="2">11 uM for 7-cyano-7-deazaguanine (at 55 degrees Celsius)</KM>
        <KM evidence="2">34 uM for NADPH (at 55 degrees Celsius)</KM>
        <KM evidence="2">336 uM for 5-cyanopyrrolo[2,3-d]pyrimidin-4-one (at 55 degrees Celsius)</KM>
        <text>kcat is 3.9 min(-1) for the reduction of 7-cyano-7-deazaguanine, and 9.3 min(-1) for that of 5-cyanopyrrolo[2,3-d]pyrimidin-4-one (at 55 degrees Celsius).</text>
    </kinetics>
    <phDependence>
        <text evidence="2">Optimum pH is 7.5.</text>
    </phDependence>
    <temperatureDependence>
        <text evidence="2">Enzymatic activity increases 12-fold in response to a change in temperature from 25 to 65 degrees Celsius. Displays a half life of 43 hours at 55 degrees Celsius.</text>
    </temperatureDependence>
</comment>
<comment type="pathway">
    <text evidence="1">tRNA modification; tRNA-queuosine biosynthesis.</text>
</comment>
<comment type="subcellular location">
    <subcellularLocation>
        <location evidence="1">Cytoplasm</location>
    </subcellularLocation>
</comment>
<comment type="similarity">
    <text evidence="1">Belongs to the GTP cyclohydrolase I family. QueF type 1 subfamily.</text>
</comment>
<keyword id="KW-0963">Cytoplasm</keyword>
<keyword id="KW-0521">NADP</keyword>
<keyword id="KW-0560">Oxidoreductase</keyword>
<keyword id="KW-0671">Queuosine biosynthesis</keyword>
<keyword id="KW-1185">Reference proteome</keyword>
<reference key="1">
    <citation type="journal article" date="2004" name="Nucleic Acids Res.">
        <title>Thermoadaptation trait revealed by the genome sequence of thermophilic Geobacillus kaustophilus.</title>
        <authorList>
            <person name="Takami H."/>
            <person name="Takaki Y."/>
            <person name="Chee G.-J."/>
            <person name="Nishi S."/>
            <person name="Shimamura S."/>
            <person name="Suzuki H."/>
            <person name="Matsui S."/>
            <person name="Uchiyama I."/>
        </authorList>
    </citation>
    <scope>NUCLEOTIDE SEQUENCE [LARGE SCALE GENOMIC DNA]</scope>
    <source>
        <strain>HTA426</strain>
    </source>
</reference>
<reference key="2">
    <citation type="journal article" date="2012" name="Adv. Synth. Catal.">
        <title>Nitrile reductase from Geobacillus kaustophilus: a potential catalyst for a new nitrile biotransformation reaction.</title>
        <authorList>
            <person name="Wilding B."/>
            <person name="Winkler M."/>
            <person name="Petschacher B."/>
            <person name="Kratzer R."/>
            <person name="Glieder A."/>
            <person name="Klempier N."/>
        </authorList>
    </citation>
    <scope>FUNCTION</scope>
    <scope>CATALYTIC ACTIVITY</scope>
    <scope>SUBSTRATE SPECIFICITY</scope>
    <scope>BIOPHYSICOCHEMICAL PROPERTIES</scope>
    <scope>ACTIVITY REGULATION</scope>
    <scope>MUTAGENESIS OF CYS-56</scope>
</reference>